<proteinExistence type="inferred from homology"/>
<name>GCSH_SODGM</name>
<accession>Q2NRE9</accession>
<feature type="chain" id="PRO_0000302441" description="Glycine cleavage system H protein">
    <location>
        <begin position="1"/>
        <end position="131"/>
    </location>
</feature>
<feature type="domain" description="Lipoyl-binding" evidence="2">
    <location>
        <begin position="24"/>
        <end position="106"/>
    </location>
</feature>
<feature type="modified residue" description="N6-lipoyllysine" evidence="1">
    <location>
        <position position="65"/>
    </location>
</feature>
<comment type="function">
    <text evidence="1">The glycine cleavage system catalyzes the degradation of glycine. The H protein shuttles the methylamine group of glycine from the P protein to the T protein.</text>
</comment>
<comment type="cofactor">
    <cofactor evidence="1">
        <name>(R)-lipoate</name>
        <dbReference type="ChEBI" id="CHEBI:83088"/>
    </cofactor>
    <text evidence="1">Binds 1 lipoyl cofactor covalently.</text>
</comment>
<comment type="subunit">
    <text evidence="1">The glycine cleavage system is composed of four proteins: P, T, L and H.</text>
</comment>
<comment type="similarity">
    <text evidence="1">Belongs to the GcvH family.</text>
</comment>
<keyword id="KW-0450">Lipoyl</keyword>
<evidence type="ECO:0000255" key="1">
    <source>
        <dbReference type="HAMAP-Rule" id="MF_00272"/>
    </source>
</evidence>
<evidence type="ECO:0000255" key="2">
    <source>
        <dbReference type="PROSITE-ProRule" id="PRU01066"/>
    </source>
</evidence>
<dbReference type="EMBL" id="AP008232">
    <property type="protein sequence ID" value="BAE75276.1"/>
    <property type="molecule type" value="Genomic_DNA"/>
</dbReference>
<dbReference type="RefSeq" id="WP_011411731.1">
    <property type="nucleotide sequence ID" value="NC_007712.1"/>
</dbReference>
<dbReference type="SMR" id="Q2NRE9"/>
<dbReference type="STRING" id="343509.SG2001"/>
<dbReference type="KEGG" id="sgl:SG2001"/>
<dbReference type="eggNOG" id="COG0509">
    <property type="taxonomic scope" value="Bacteria"/>
</dbReference>
<dbReference type="HOGENOM" id="CLU_097408_2_1_6"/>
<dbReference type="OrthoDB" id="9796712at2"/>
<dbReference type="Proteomes" id="UP000001932">
    <property type="component" value="Chromosome"/>
</dbReference>
<dbReference type="GO" id="GO:0005829">
    <property type="term" value="C:cytosol"/>
    <property type="evidence" value="ECO:0007669"/>
    <property type="project" value="TreeGrafter"/>
</dbReference>
<dbReference type="GO" id="GO:0005960">
    <property type="term" value="C:glycine cleavage complex"/>
    <property type="evidence" value="ECO:0007669"/>
    <property type="project" value="InterPro"/>
</dbReference>
<dbReference type="GO" id="GO:0019464">
    <property type="term" value="P:glycine decarboxylation via glycine cleavage system"/>
    <property type="evidence" value="ECO:0007669"/>
    <property type="project" value="UniProtKB-UniRule"/>
</dbReference>
<dbReference type="CDD" id="cd06848">
    <property type="entry name" value="GCS_H"/>
    <property type="match status" value="1"/>
</dbReference>
<dbReference type="FunFam" id="2.40.50.100:FF:000011">
    <property type="entry name" value="Glycine cleavage system H protein"/>
    <property type="match status" value="1"/>
</dbReference>
<dbReference type="Gene3D" id="2.40.50.100">
    <property type="match status" value="1"/>
</dbReference>
<dbReference type="HAMAP" id="MF_00272">
    <property type="entry name" value="GcvH"/>
    <property type="match status" value="1"/>
</dbReference>
<dbReference type="InterPro" id="IPR003016">
    <property type="entry name" value="2-oxoA_DH_lipoyl-BS"/>
</dbReference>
<dbReference type="InterPro" id="IPR000089">
    <property type="entry name" value="Biotin_lipoyl"/>
</dbReference>
<dbReference type="InterPro" id="IPR002930">
    <property type="entry name" value="GCV_H"/>
</dbReference>
<dbReference type="InterPro" id="IPR033753">
    <property type="entry name" value="GCV_H/Fam206"/>
</dbReference>
<dbReference type="InterPro" id="IPR017453">
    <property type="entry name" value="GCV_H_sub"/>
</dbReference>
<dbReference type="InterPro" id="IPR011053">
    <property type="entry name" value="Single_hybrid_motif"/>
</dbReference>
<dbReference type="NCBIfam" id="TIGR00527">
    <property type="entry name" value="gcvH"/>
    <property type="match status" value="1"/>
</dbReference>
<dbReference type="NCBIfam" id="NF002270">
    <property type="entry name" value="PRK01202.1"/>
    <property type="match status" value="1"/>
</dbReference>
<dbReference type="PANTHER" id="PTHR11715">
    <property type="entry name" value="GLYCINE CLEAVAGE SYSTEM H PROTEIN"/>
    <property type="match status" value="1"/>
</dbReference>
<dbReference type="PANTHER" id="PTHR11715:SF3">
    <property type="entry name" value="GLYCINE CLEAVAGE SYSTEM H PROTEIN-RELATED"/>
    <property type="match status" value="1"/>
</dbReference>
<dbReference type="Pfam" id="PF01597">
    <property type="entry name" value="GCV_H"/>
    <property type="match status" value="1"/>
</dbReference>
<dbReference type="SUPFAM" id="SSF51230">
    <property type="entry name" value="Single hybrid motif"/>
    <property type="match status" value="1"/>
</dbReference>
<dbReference type="PROSITE" id="PS50968">
    <property type="entry name" value="BIOTINYL_LIPOYL"/>
    <property type="match status" value="1"/>
</dbReference>
<dbReference type="PROSITE" id="PS00189">
    <property type="entry name" value="LIPOYL"/>
    <property type="match status" value="1"/>
</dbReference>
<organism>
    <name type="scientific">Sodalis glossinidius (strain morsitans)</name>
    <dbReference type="NCBI Taxonomy" id="343509"/>
    <lineage>
        <taxon>Bacteria</taxon>
        <taxon>Pseudomonadati</taxon>
        <taxon>Pseudomonadota</taxon>
        <taxon>Gammaproteobacteria</taxon>
        <taxon>Enterobacterales</taxon>
        <taxon>Bruguierivoracaceae</taxon>
        <taxon>Sodalis</taxon>
    </lineage>
</organism>
<reference key="1">
    <citation type="journal article" date="2006" name="Genome Res.">
        <title>Massive genome erosion and functional adaptations provide insights into the symbiotic lifestyle of Sodalis glossinidius in the tsetse host.</title>
        <authorList>
            <person name="Toh H."/>
            <person name="Weiss B.L."/>
            <person name="Perkin S.A.H."/>
            <person name="Yamashita A."/>
            <person name="Oshima K."/>
            <person name="Hattori M."/>
            <person name="Aksoy S."/>
        </authorList>
    </citation>
    <scope>NUCLEOTIDE SEQUENCE [LARGE SCALE GENOMIC DNA]</scope>
    <source>
        <strain>morsitans</strain>
    </source>
</reference>
<gene>
    <name evidence="1" type="primary">gcvH</name>
    <name type="ordered locus">SG2001</name>
</gene>
<protein>
    <recommendedName>
        <fullName evidence="1">Glycine cleavage system H protein</fullName>
    </recommendedName>
</protein>
<sequence length="131" mass="14035">MSNVPTELKYTASHEWVLNEGDGVYCVGITEHAQELLGDMVFMDLPEVGATFSAGEDCAVAESVKAASDIYAPISGEIVAVNDDLEASPELVNSAPYTDGWLFKIKATDDSEVNELLDAAAYQAAIDEEDE</sequence>